<proteinExistence type="predicted"/>
<reference key="1">
    <citation type="journal article" date="2004" name="Science">
        <title>The 1.2-megabase genome sequence of Mimivirus.</title>
        <authorList>
            <person name="Raoult D."/>
            <person name="Audic S."/>
            <person name="Robert C."/>
            <person name="Abergel C."/>
            <person name="Renesto P."/>
            <person name="Ogata H."/>
            <person name="La Scola B."/>
            <person name="Susan M."/>
            <person name="Claverie J.-M."/>
        </authorList>
    </citation>
    <scope>NUCLEOTIDE SEQUENCE [LARGE SCALE GENOMIC DNA]</scope>
    <source>
        <strain>Rowbotham-Bradford</strain>
    </source>
</reference>
<sequence length="340" mass="39430">MTQVNNWNELVSVLEGKTDVLFVELLIKVNRHINSNRFNKNFNPTTVIKSQQSIFDTFKLIFEQLSIETDTNEIFTEITSLTTNNTMTFLMTGVGKWIKFHGKETSNIHFIDDEKTIISDRTLADFLNKITEFQNQYTYFGKKPLVYYKFKDLPSGEILEYIKTFDVIPCVLTDVTPSLNYDKDNFESTLLLDQASVLTLCSNLSWGYSDTFYQLSQENKTKEQVIANKLEMDNLILGKRLLVNKSVYDGIVAKIDFTAGPTEKNRFENISKYLEIVEDCINPRFLKMKDSELICTSVAERECATIVTNNKHVWKKIKLFYKEIPCKLFVSVQLTETKYN</sequence>
<name>YR220_MIMIV</name>
<keyword id="KW-1185">Reference proteome</keyword>
<organism>
    <name type="scientific">Acanthamoeba polyphaga mimivirus</name>
    <name type="common">APMV</name>
    <dbReference type="NCBI Taxonomy" id="212035"/>
    <lineage>
        <taxon>Viruses</taxon>
        <taxon>Varidnaviria</taxon>
        <taxon>Bamfordvirae</taxon>
        <taxon>Nucleocytoviricota</taxon>
        <taxon>Megaviricetes</taxon>
        <taxon>Imitervirales</taxon>
        <taxon>Mimiviridae</taxon>
        <taxon>Megamimivirinae</taxon>
        <taxon>Mimivirus</taxon>
        <taxon>Mimivirus bradfordmassiliense</taxon>
    </lineage>
</organism>
<protein>
    <recommendedName>
        <fullName>Uncharacterized protein R220</fullName>
    </recommendedName>
</protein>
<dbReference type="EMBL" id="AY653733">
    <property type="protein sequence ID" value="AAV50493.1"/>
    <property type="molecule type" value="Genomic_DNA"/>
</dbReference>
<dbReference type="KEGG" id="vg:9924827"/>
<dbReference type="OrthoDB" id="30851at10239"/>
<dbReference type="Proteomes" id="UP000001134">
    <property type="component" value="Genome"/>
</dbReference>
<dbReference type="InterPro" id="IPR010733">
    <property type="entry name" value="DUF1308"/>
</dbReference>
<dbReference type="Pfam" id="PF07000">
    <property type="entry name" value="DUF1308"/>
    <property type="match status" value="1"/>
</dbReference>
<gene>
    <name type="ordered locus">MIMI_R220</name>
</gene>
<organismHost>
    <name type="scientific">Acanthamoeba polyphaga</name>
    <name type="common">Amoeba</name>
    <dbReference type="NCBI Taxonomy" id="5757"/>
</organismHost>
<accession>Q5UQA9</accession>
<feature type="chain" id="PRO_0000247385" description="Uncharacterized protein R220">
    <location>
        <begin position="1"/>
        <end position="340"/>
    </location>
</feature>